<evidence type="ECO:0000255" key="1">
    <source>
        <dbReference type="HAMAP-Rule" id="MF_00049"/>
    </source>
</evidence>
<proteinExistence type="inferred from homology"/>
<organism>
    <name type="scientific">Wigglesworthia glossinidia brevipalpis</name>
    <dbReference type="NCBI Taxonomy" id="36870"/>
    <lineage>
        <taxon>Bacteria</taxon>
        <taxon>Pseudomonadati</taxon>
        <taxon>Pseudomonadota</taxon>
        <taxon>Gammaproteobacteria</taxon>
        <taxon>Enterobacterales</taxon>
        <taxon>Erwiniaceae</taxon>
        <taxon>Wigglesworthia</taxon>
    </lineage>
</organism>
<comment type="catalytic activity">
    <reaction evidence="1">
        <text>tRNA(Leu) + L-leucine + ATP = L-leucyl-tRNA(Leu) + AMP + diphosphate</text>
        <dbReference type="Rhea" id="RHEA:11688"/>
        <dbReference type="Rhea" id="RHEA-COMP:9613"/>
        <dbReference type="Rhea" id="RHEA-COMP:9622"/>
        <dbReference type="ChEBI" id="CHEBI:30616"/>
        <dbReference type="ChEBI" id="CHEBI:33019"/>
        <dbReference type="ChEBI" id="CHEBI:57427"/>
        <dbReference type="ChEBI" id="CHEBI:78442"/>
        <dbReference type="ChEBI" id="CHEBI:78494"/>
        <dbReference type="ChEBI" id="CHEBI:456215"/>
        <dbReference type="EC" id="6.1.1.4"/>
    </reaction>
</comment>
<comment type="subcellular location">
    <subcellularLocation>
        <location evidence="1">Cytoplasm</location>
    </subcellularLocation>
</comment>
<comment type="similarity">
    <text evidence="1">Belongs to the class-I aminoacyl-tRNA synthetase family.</text>
</comment>
<accession>Q8D333</accession>
<sequence>MKKEYSCKEIERFVQKHWEINDTFKVLEDSKKDKYYCVSMMPYPSGKLHMGHVRNYVLGDVIARYQRMLGKNVLHPIGWDAFGLPAETAAINNKISPEKWTISSIEYMKNQLKLLGCSYDWSREIITCDPKYYKWEQLLFTKLYNKNKAYKKKSIVNWCPKDKTVLANEQVIDNLCWRCSSNIEMKKIFQWFIKITDYADELLNDLNDLKLWPKKVKVMQRNWIGKSKGIDVLFHIKDTNEKILIYVSKLEIFMGITFIVISKEHKLIKFIENKLPSIAKLIKNYNNEKTLELNLRKKTKDGIFTSLFAIHPISKKILPIWISNFFFTNNDIYQSIAAIPAYNKNELDFAKKYNLPIRYVIKDYFEKIIDFKKYNNLKEGILFNSNIFNGLNLKNGYDRISKFLISNKIGKRSTHYKLRDWCISRQRYWGAPIPVLITKENKILVVSENELPVILPKAKNNNIIHSLNSYKDWIYVLNDNKLVKREVDTFDTFMESSWYLHRYTCTKYTKDILDPNATNYWFPVDQYIGGIEHATMHLLYLRFYHKILRDMNFVKCDEPVNRLLCQGMVLSDTFYYFSKSGNKIWTSPKNKNFERNKDNKIINAIDSLGNKLTHIGMSKMSKSKNNGVDPQGIINKYGSDTLRLFIMFAAPPELSLEWSDKGIIGANRFIKKLWKITYNYLNLKKNNNYVFYKKLKEQDNILLEKSFYVINKVTKDIDKNQTFNTAIAEIMKLTNHLNSYINKNEYNNISIIKKVLMIIIRLLYPFIPHVCFVLWNEINKNNDIDKTKWPKIKMPFIKNKKKNIVVQINGKLKTVISFDISCNEFLIKKCVIENNKIKNLLNKKKIKNIIYVKNKIINIVLDDK</sequence>
<keyword id="KW-0030">Aminoacyl-tRNA synthetase</keyword>
<keyword id="KW-0067">ATP-binding</keyword>
<keyword id="KW-0963">Cytoplasm</keyword>
<keyword id="KW-0436">Ligase</keyword>
<keyword id="KW-0547">Nucleotide-binding</keyword>
<keyword id="KW-0648">Protein biosynthesis</keyword>
<keyword id="KW-1185">Reference proteome</keyword>
<reference key="1">
    <citation type="journal article" date="2002" name="Nat. Genet.">
        <title>Genome sequence of the endocellular obligate symbiont of tsetse flies, Wigglesworthia glossinidia.</title>
        <authorList>
            <person name="Akman L."/>
            <person name="Yamashita A."/>
            <person name="Watanabe H."/>
            <person name="Oshima K."/>
            <person name="Shiba T."/>
            <person name="Hattori M."/>
            <person name="Aksoy S."/>
        </authorList>
    </citation>
    <scope>NUCLEOTIDE SEQUENCE [LARGE SCALE GENOMIC DNA]</scope>
</reference>
<feature type="chain" id="PRO_0000152117" description="Leucine--tRNA ligase">
    <location>
        <begin position="1"/>
        <end position="864"/>
    </location>
</feature>
<feature type="short sequence motif" description="'HIGH' region">
    <location>
        <begin position="42"/>
        <end position="52"/>
    </location>
</feature>
<feature type="short sequence motif" description="'KMSKS' region">
    <location>
        <begin position="619"/>
        <end position="623"/>
    </location>
</feature>
<feature type="binding site" evidence="1">
    <location>
        <position position="622"/>
    </location>
    <ligand>
        <name>ATP</name>
        <dbReference type="ChEBI" id="CHEBI:30616"/>
    </ligand>
</feature>
<dbReference type="EC" id="6.1.1.4" evidence="1"/>
<dbReference type="EMBL" id="BA000021">
    <property type="protein sequence ID" value="BAC24314.1"/>
    <property type="molecule type" value="Genomic_DNA"/>
</dbReference>
<dbReference type="SMR" id="Q8D333"/>
<dbReference type="STRING" id="36870.gene:10368656"/>
<dbReference type="KEGG" id="wbr:leuS"/>
<dbReference type="eggNOG" id="COG0495">
    <property type="taxonomic scope" value="Bacteria"/>
</dbReference>
<dbReference type="HOGENOM" id="CLU_004427_0_0_6"/>
<dbReference type="OrthoDB" id="9810365at2"/>
<dbReference type="Proteomes" id="UP000000562">
    <property type="component" value="Chromosome"/>
</dbReference>
<dbReference type="GO" id="GO:0005829">
    <property type="term" value="C:cytosol"/>
    <property type="evidence" value="ECO:0007669"/>
    <property type="project" value="TreeGrafter"/>
</dbReference>
<dbReference type="GO" id="GO:0002161">
    <property type="term" value="F:aminoacyl-tRNA deacylase activity"/>
    <property type="evidence" value="ECO:0007669"/>
    <property type="project" value="InterPro"/>
</dbReference>
<dbReference type="GO" id="GO:0005524">
    <property type="term" value="F:ATP binding"/>
    <property type="evidence" value="ECO:0007669"/>
    <property type="project" value="UniProtKB-UniRule"/>
</dbReference>
<dbReference type="GO" id="GO:0004823">
    <property type="term" value="F:leucine-tRNA ligase activity"/>
    <property type="evidence" value="ECO:0007669"/>
    <property type="project" value="UniProtKB-UniRule"/>
</dbReference>
<dbReference type="GO" id="GO:0006429">
    <property type="term" value="P:leucyl-tRNA aminoacylation"/>
    <property type="evidence" value="ECO:0007669"/>
    <property type="project" value="UniProtKB-UniRule"/>
</dbReference>
<dbReference type="CDD" id="cd07958">
    <property type="entry name" value="Anticodon_Ia_Leu_BEm"/>
    <property type="match status" value="1"/>
</dbReference>
<dbReference type="CDD" id="cd00812">
    <property type="entry name" value="LeuRS_core"/>
    <property type="match status" value="1"/>
</dbReference>
<dbReference type="FunFam" id="1.10.730.10:FF:000002">
    <property type="entry name" value="Leucine--tRNA ligase"/>
    <property type="match status" value="1"/>
</dbReference>
<dbReference type="FunFam" id="2.20.28.290:FF:000001">
    <property type="entry name" value="Leucine--tRNA ligase"/>
    <property type="match status" value="1"/>
</dbReference>
<dbReference type="FunFam" id="3.40.50.620:FF:000003">
    <property type="entry name" value="Leucine--tRNA ligase"/>
    <property type="match status" value="1"/>
</dbReference>
<dbReference type="Gene3D" id="2.20.28.290">
    <property type="match status" value="1"/>
</dbReference>
<dbReference type="Gene3D" id="3.10.20.590">
    <property type="match status" value="1"/>
</dbReference>
<dbReference type="Gene3D" id="3.40.50.620">
    <property type="entry name" value="HUPs"/>
    <property type="match status" value="2"/>
</dbReference>
<dbReference type="Gene3D" id="1.10.730.10">
    <property type="entry name" value="Isoleucyl-tRNA Synthetase, Domain 1"/>
    <property type="match status" value="2"/>
</dbReference>
<dbReference type="HAMAP" id="MF_00049_B">
    <property type="entry name" value="Leu_tRNA_synth_B"/>
    <property type="match status" value="1"/>
</dbReference>
<dbReference type="InterPro" id="IPR001412">
    <property type="entry name" value="aa-tRNA-synth_I_CS"/>
</dbReference>
<dbReference type="InterPro" id="IPR002300">
    <property type="entry name" value="aa-tRNA-synth_Ia"/>
</dbReference>
<dbReference type="InterPro" id="IPR002302">
    <property type="entry name" value="Leu-tRNA-ligase"/>
</dbReference>
<dbReference type="InterPro" id="IPR025709">
    <property type="entry name" value="Leu_tRNA-synth_edit"/>
</dbReference>
<dbReference type="InterPro" id="IPR013155">
    <property type="entry name" value="M/V/L/I-tRNA-synth_anticd-bd"/>
</dbReference>
<dbReference type="InterPro" id="IPR015413">
    <property type="entry name" value="Methionyl/Leucyl_tRNA_Synth"/>
</dbReference>
<dbReference type="InterPro" id="IPR014729">
    <property type="entry name" value="Rossmann-like_a/b/a_fold"/>
</dbReference>
<dbReference type="InterPro" id="IPR009080">
    <property type="entry name" value="tRNAsynth_Ia_anticodon-bd"/>
</dbReference>
<dbReference type="InterPro" id="IPR009008">
    <property type="entry name" value="Val/Leu/Ile-tRNA-synth_edit"/>
</dbReference>
<dbReference type="NCBIfam" id="TIGR00396">
    <property type="entry name" value="leuS_bact"/>
    <property type="match status" value="1"/>
</dbReference>
<dbReference type="PANTHER" id="PTHR43740:SF2">
    <property type="entry name" value="LEUCINE--TRNA LIGASE, MITOCHONDRIAL"/>
    <property type="match status" value="1"/>
</dbReference>
<dbReference type="PANTHER" id="PTHR43740">
    <property type="entry name" value="LEUCYL-TRNA SYNTHETASE"/>
    <property type="match status" value="1"/>
</dbReference>
<dbReference type="Pfam" id="PF08264">
    <property type="entry name" value="Anticodon_1"/>
    <property type="match status" value="1"/>
</dbReference>
<dbReference type="Pfam" id="PF00133">
    <property type="entry name" value="tRNA-synt_1"/>
    <property type="match status" value="2"/>
</dbReference>
<dbReference type="Pfam" id="PF13603">
    <property type="entry name" value="tRNA-synt_1_2"/>
    <property type="match status" value="1"/>
</dbReference>
<dbReference type="Pfam" id="PF09334">
    <property type="entry name" value="tRNA-synt_1g"/>
    <property type="match status" value="1"/>
</dbReference>
<dbReference type="PRINTS" id="PR00985">
    <property type="entry name" value="TRNASYNTHLEU"/>
</dbReference>
<dbReference type="SUPFAM" id="SSF47323">
    <property type="entry name" value="Anticodon-binding domain of a subclass of class I aminoacyl-tRNA synthetases"/>
    <property type="match status" value="1"/>
</dbReference>
<dbReference type="SUPFAM" id="SSF52374">
    <property type="entry name" value="Nucleotidylyl transferase"/>
    <property type="match status" value="1"/>
</dbReference>
<dbReference type="SUPFAM" id="SSF50677">
    <property type="entry name" value="ValRS/IleRS/LeuRS editing domain"/>
    <property type="match status" value="1"/>
</dbReference>
<dbReference type="PROSITE" id="PS00178">
    <property type="entry name" value="AA_TRNA_LIGASE_I"/>
    <property type="match status" value="1"/>
</dbReference>
<name>SYL_WIGBR</name>
<gene>
    <name evidence="1" type="primary">leuS</name>
    <name type="ordered locus">WIGBR1680</name>
</gene>
<protein>
    <recommendedName>
        <fullName evidence="1">Leucine--tRNA ligase</fullName>
        <ecNumber evidence="1">6.1.1.4</ecNumber>
    </recommendedName>
    <alternativeName>
        <fullName evidence="1">Leucyl-tRNA synthetase</fullName>
        <shortName evidence="1">LeuRS</shortName>
    </alternativeName>
</protein>